<name>ADPR2_DROME</name>
<comment type="function">
    <text evidence="1">Protein ADP-ribosyl hydrolase that specifically removes mono-ADP-ribosyl modifications from protein arginine residues.</text>
</comment>
<comment type="catalytic activity">
    <reaction evidence="1">
        <text>N(omega)-(ADP-D-ribosyl)-L-arginyl-[protein] + H2O = ADP-D-ribose + L-arginyl-[protein]</text>
        <dbReference type="Rhea" id="RHEA:14885"/>
        <dbReference type="Rhea" id="RHEA-COMP:10532"/>
        <dbReference type="Rhea" id="RHEA-COMP:15087"/>
        <dbReference type="ChEBI" id="CHEBI:15377"/>
        <dbReference type="ChEBI" id="CHEBI:29965"/>
        <dbReference type="ChEBI" id="CHEBI:57967"/>
        <dbReference type="ChEBI" id="CHEBI:142554"/>
        <dbReference type="EC" id="3.2.2.19"/>
    </reaction>
</comment>
<comment type="catalytic activity">
    <reaction evidence="1">
        <text>N(omega)-(ADP-D-ribosyl)-L-arginine + H2O = ADP-D-ribose + L-arginine</text>
        <dbReference type="Rhea" id="RHEA:20784"/>
        <dbReference type="ChEBI" id="CHEBI:15377"/>
        <dbReference type="ChEBI" id="CHEBI:32682"/>
        <dbReference type="ChEBI" id="CHEBI:57967"/>
        <dbReference type="ChEBI" id="CHEBI:60267"/>
        <dbReference type="EC" id="3.2.2.19"/>
    </reaction>
</comment>
<sequence length="508" mass="57376">MRSFLYMLSQRPKLACLCGKSIIIWPGKRTNLPENAFTQRMLQECGQMAKPDASVDLDNFKAISEQSPAEFGIDSCRVKAQPEDRSDRIREQIASAYPVIHERTLLLFISFLEHKLTFGSEQEKAIYKDMTVVDLVQRLLAKRCVWFFGANDYYRTMQGNIGNEGFEAVGTPAEKEPLTLTSVLSYDEIKLSALLYVSCHSEFINNGSRVNGGEVLQNKDTIEREGVVIGLIGARFERPDVMEYQDIMITKTQNTEANGYGFDLEQISSETVTPASDLRRIWREFYEEPRDFIYADTPYDTTRFEEVSQGIFDHQVMRKRYAISFDTLLLEAQDRAFKAGKPAYIHVVGIGLGVWKAARQQERTFLESFEGRLRALGERLSHIGVVHFSWFHLACVGSLHDGAIIPVDKHPQGGIRIRNSVRNPGDKLTEDMLPVVTYAWDGNALPGNEFWANMLISTGDPAAACSTLISELQNPHINVHYMNGANLHIASVEHGLLHVGDYARRLIV</sequence>
<proteinExistence type="evidence at protein level"/>
<keyword id="KW-0002">3D-structure</keyword>
<keyword id="KW-0378">Hydrolase</keyword>
<keyword id="KW-1185">Reference proteome</keyword>
<evidence type="ECO:0000269" key="1">
    <source>
    </source>
</evidence>
<evidence type="ECO:0000305" key="2"/>
<evidence type="ECO:0000312" key="3">
    <source>
        <dbReference type="EMBL" id="AAM29295.1"/>
    </source>
</evidence>
<evidence type="ECO:0000312" key="4">
    <source>
        <dbReference type="FlyBase" id="FBgn0029710"/>
    </source>
</evidence>
<evidence type="ECO:0000312" key="5">
    <source>
        <dbReference type="Proteomes" id="UP000000803"/>
    </source>
</evidence>
<evidence type="ECO:0007744" key="6">
    <source>
        <dbReference type="PDB" id="8DMU"/>
    </source>
</evidence>
<evidence type="ECO:0007829" key="7">
    <source>
        <dbReference type="PDB" id="8DMU"/>
    </source>
</evidence>
<reference evidence="5" key="1">
    <citation type="journal article" date="2000" name="Science">
        <title>The genome sequence of Drosophila melanogaster.</title>
        <authorList>
            <person name="Adams M.D."/>
            <person name="Celniker S.E."/>
            <person name="Holt R.A."/>
            <person name="Evans C.A."/>
            <person name="Gocayne J.D."/>
            <person name="Amanatides P.G."/>
            <person name="Scherer S.E."/>
            <person name="Li P.W."/>
            <person name="Hoskins R.A."/>
            <person name="Galle R.F."/>
            <person name="George R.A."/>
            <person name="Lewis S.E."/>
            <person name="Richards S."/>
            <person name="Ashburner M."/>
            <person name="Henderson S.N."/>
            <person name="Sutton G.G."/>
            <person name="Wortman J.R."/>
            <person name="Yandell M.D."/>
            <person name="Zhang Q."/>
            <person name="Chen L.X."/>
            <person name="Brandon R.C."/>
            <person name="Rogers Y.-H.C."/>
            <person name="Blazej R.G."/>
            <person name="Champe M."/>
            <person name="Pfeiffer B.D."/>
            <person name="Wan K.H."/>
            <person name="Doyle C."/>
            <person name="Baxter E.G."/>
            <person name="Helt G."/>
            <person name="Nelson C.R."/>
            <person name="Miklos G.L.G."/>
            <person name="Abril J.F."/>
            <person name="Agbayani A."/>
            <person name="An H.-J."/>
            <person name="Andrews-Pfannkoch C."/>
            <person name="Baldwin D."/>
            <person name="Ballew R.M."/>
            <person name="Basu A."/>
            <person name="Baxendale J."/>
            <person name="Bayraktaroglu L."/>
            <person name="Beasley E.M."/>
            <person name="Beeson K.Y."/>
            <person name="Benos P.V."/>
            <person name="Berman B.P."/>
            <person name="Bhandari D."/>
            <person name="Bolshakov S."/>
            <person name="Borkova D."/>
            <person name="Botchan M.R."/>
            <person name="Bouck J."/>
            <person name="Brokstein P."/>
            <person name="Brottier P."/>
            <person name="Burtis K.C."/>
            <person name="Busam D.A."/>
            <person name="Butler H."/>
            <person name="Cadieu E."/>
            <person name="Center A."/>
            <person name="Chandra I."/>
            <person name="Cherry J.M."/>
            <person name="Cawley S."/>
            <person name="Dahlke C."/>
            <person name="Davenport L.B."/>
            <person name="Davies P."/>
            <person name="de Pablos B."/>
            <person name="Delcher A."/>
            <person name="Deng Z."/>
            <person name="Mays A.D."/>
            <person name="Dew I."/>
            <person name="Dietz S.M."/>
            <person name="Dodson K."/>
            <person name="Doup L.E."/>
            <person name="Downes M."/>
            <person name="Dugan-Rocha S."/>
            <person name="Dunkov B.C."/>
            <person name="Dunn P."/>
            <person name="Durbin K.J."/>
            <person name="Evangelista C.C."/>
            <person name="Ferraz C."/>
            <person name="Ferriera S."/>
            <person name="Fleischmann W."/>
            <person name="Fosler C."/>
            <person name="Gabrielian A.E."/>
            <person name="Garg N.S."/>
            <person name="Gelbart W.M."/>
            <person name="Glasser K."/>
            <person name="Glodek A."/>
            <person name="Gong F."/>
            <person name="Gorrell J.H."/>
            <person name="Gu Z."/>
            <person name="Guan P."/>
            <person name="Harris M."/>
            <person name="Harris N.L."/>
            <person name="Harvey D.A."/>
            <person name="Heiman T.J."/>
            <person name="Hernandez J.R."/>
            <person name="Houck J."/>
            <person name="Hostin D."/>
            <person name="Houston K.A."/>
            <person name="Howland T.J."/>
            <person name="Wei M.-H."/>
            <person name="Ibegwam C."/>
            <person name="Jalali M."/>
            <person name="Kalush F."/>
            <person name="Karpen G.H."/>
            <person name="Ke Z."/>
            <person name="Kennison J.A."/>
            <person name="Ketchum K.A."/>
            <person name="Kimmel B.E."/>
            <person name="Kodira C.D."/>
            <person name="Kraft C.L."/>
            <person name="Kravitz S."/>
            <person name="Kulp D."/>
            <person name="Lai Z."/>
            <person name="Lasko P."/>
            <person name="Lei Y."/>
            <person name="Levitsky A.A."/>
            <person name="Li J.H."/>
            <person name="Li Z."/>
            <person name="Liang Y."/>
            <person name="Lin X."/>
            <person name="Liu X."/>
            <person name="Mattei B."/>
            <person name="McIntosh T.C."/>
            <person name="McLeod M.P."/>
            <person name="McPherson D."/>
            <person name="Merkulov G."/>
            <person name="Milshina N.V."/>
            <person name="Mobarry C."/>
            <person name="Morris J."/>
            <person name="Moshrefi A."/>
            <person name="Mount S.M."/>
            <person name="Moy M."/>
            <person name="Murphy B."/>
            <person name="Murphy L."/>
            <person name="Muzny D.M."/>
            <person name="Nelson D.L."/>
            <person name="Nelson D.R."/>
            <person name="Nelson K.A."/>
            <person name="Nixon K."/>
            <person name="Nusskern D.R."/>
            <person name="Pacleb J.M."/>
            <person name="Palazzolo M."/>
            <person name="Pittman G.S."/>
            <person name="Pan S."/>
            <person name="Pollard J."/>
            <person name="Puri V."/>
            <person name="Reese M.G."/>
            <person name="Reinert K."/>
            <person name="Remington K."/>
            <person name="Saunders R.D.C."/>
            <person name="Scheeler F."/>
            <person name="Shen H."/>
            <person name="Shue B.C."/>
            <person name="Siden-Kiamos I."/>
            <person name="Simpson M."/>
            <person name="Skupski M.P."/>
            <person name="Smith T.J."/>
            <person name="Spier E."/>
            <person name="Spradling A.C."/>
            <person name="Stapleton M."/>
            <person name="Strong R."/>
            <person name="Sun E."/>
            <person name="Svirskas R."/>
            <person name="Tector C."/>
            <person name="Turner R."/>
            <person name="Venter E."/>
            <person name="Wang A.H."/>
            <person name="Wang X."/>
            <person name="Wang Z.-Y."/>
            <person name="Wassarman D.A."/>
            <person name="Weinstock G.M."/>
            <person name="Weissenbach J."/>
            <person name="Williams S.M."/>
            <person name="Woodage T."/>
            <person name="Worley K.C."/>
            <person name="Wu D."/>
            <person name="Yang S."/>
            <person name="Yao Q.A."/>
            <person name="Ye J."/>
            <person name="Yeh R.-F."/>
            <person name="Zaveri J.S."/>
            <person name="Zhan M."/>
            <person name="Zhang G."/>
            <person name="Zhao Q."/>
            <person name="Zheng L."/>
            <person name="Zheng X.H."/>
            <person name="Zhong F.N."/>
            <person name="Zhong W."/>
            <person name="Zhou X."/>
            <person name="Zhu S.C."/>
            <person name="Zhu X."/>
            <person name="Smith H.O."/>
            <person name="Gibbs R.A."/>
            <person name="Myers E.W."/>
            <person name="Rubin G.M."/>
            <person name="Venter J.C."/>
        </authorList>
    </citation>
    <scope>NUCLEOTIDE SEQUENCE [LARGE SCALE GENOMIC DNA]</scope>
    <source>
        <strain evidence="5">Berkeley</strain>
    </source>
</reference>
<reference evidence="5" key="2">
    <citation type="journal article" date="2002" name="Genome Biol.">
        <title>Annotation of the Drosophila melanogaster euchromatic genome: a systematic review.</title>
        <authorList>
            <person name="Misra S."/>
            <person name="Crosby M.A."/>
            <person name="Mungall C.J."/>
            <person name="Matthews B.B."/>
            <person name="Campbell K.S."/>
            <person name="Hradecky P."/>
            <person name="Huang Y."/>
            <person name="Kaminker J.S."/>
            <person name="Millburn G.H."/>
            <person name="Prochnik S.E."/>
            <person name="Smith C.D."/>
            <person name="Tupy J.L."/>
            <person name="Whitfield E.J."/>
            <person name="Bayraktaroglu L."/>
            <person name="Berman B.P."/>
            <person name="Bettencourt B.R."/>
            <person name="Celniker S.E."/>
            <person name="de Grey A.D.N.J."/>
            <person name="Drysdale R.A."/>
            <person name="Harris N.L."/>
            <person name="Richter J."/>
            <person name="Russo S."/>
            <person name="Schroeder A.J."/>
            <person name="Shu S.Q."/>
            <person name="Stapleton M."/>
            <person name="Yamada C."/>
            <person name="Ashburner M."/>
            <person name="Gelbart W.M."/>
            <person name="Rubin G.M."/>
            <person name="Lewis S.E."/>
        </authorList>
    </citation>
    <scope>GENOME REANNOTATION</scope>
    <source>
        <strain evidence="5">Berkeley</strain>
    </source>
</reference>
<reference evidence="3" key="3">
    <citation type="journal article" date="2002" name="Genome Biol.">
        <title>A Drosophila full-length cDNA resource.</title>
        <authorList>
            <person name="Stapleton M."/>
            <person name="Carlson J.W."/>
            <person name="Brokstein P."/>
            <person name="Yu C."/>
            <person name="Champe M."/>
            <person name="George R.A."/>
            <person name="Guarin H."/>
            <person name="Kronmiller B."/>
            <person name="Pacleb J.M."/>
            <person name="Park S."/>
            <person name="Wan K.H."/>
            <person name="Rubin G.M."/>
            <person name="Celniker S.E."/>
        </authorList>
    </citation>
    <scope>NUCLEOTIDE SEQUENCE [LARGE SCALE MRNA]</scope>
    <source>
        <strain evidence="3">Berkeley</strain>
        <tissue evidence="3">Testis</tissue>
    </source>
</reference>
<reference evidence="6" key="4">
    <citation type="journal article" date="2024" name="Nat. Commun.">
        <title>Legionella metaeffector MavL reverses ubiquitin ADP-ribosylation via a conserved arginine-specific macrodomain.</title>
        <authorList>
            <person name="Zhang Z."/>
            <person name="Fu J."/>
            <person name="Rack J.G.M."/>
            <person name="Li C."/>
            <person name="Voorneveld J."/>
            <person name="Filippov D.V."/>
            <person name="Ahel I."/>
            <person name="Luo Z.Q."/>
            <person name="Das C."/>
        </authorList>
    </citation>
    <scope>X-RAY CRYSTALLOGRAPHY (2.00 ANGSTROMS) OF 25-508</scope>
    <scope>FUNCTION</scope>
    <scope>CATALYTIC ACTIVITY</scope>
</reference>
<protein>
    <recommendedName>
        <fullName evidence="2">ADP-ribosylarginine hydrolase CG3568</fullName>
        <ecNumber evidence="1">3.2.2.19</ecNumber>
    </recommendedName>
</protein>
<organism evidence="5">
    <name type="scientific">Drosophila melanogaster</name>
    <name type="common">Fruit fly</name>
    <dbReference type="NCBI Taxonomy" id="7227"/>
    <lineage>
        <taxon>Eukaryota</taxon>
        <taxon>Metazoa</taxon>
        <taxon>Ecdysozoa</taxon>
        <taxon>Arthropoda</taxon>
        <taxon>Hexapoda</taxon>
        <taxon>Insecta</taxon>
        <taxon>Pterygota</taxon>
        <taxon>Neoptera</taxon>
        <taxon>Endopterygota</taxon>
        <taxon>Diptera</taxon>
        <taxon>Brachycera</taxon>
        <taxon>Muscomorpha</taxon>
        <taxon>Ephydroidea</taxon>
        <taxon>Drosophilidae</taxon>
        <taxon>Drosophila</taxon>
        <taxon>Sophophora</taxon>
    </lineage>
</organism>
<feature type="chain" id="PRO_0000461645" description="ADP-ribosylarginine hydrolase CG3568">
    <location>
        <begin position="1"/>
        <end position="508"/>
    </location>
</feature>
<feature type="binding site" evidence="1 6">
    <location>
        <position position="209"/>
    </location>
    <ligand>
        <name>ADP-D-ribose</name>
        <dbReference type="ChEBI" id="CHEBI:57967"/>
    </ligand>
    <ligandPart>
        <name>adenine group</name>
        <dbReference type="ChEBI" id="CHEBI:30756"/>
    </ligandPart>
</feature>
<feature type="binding site" evidence="1 6">
    <location>
        <position position="349"/>
    </location>
    <ligand>
        <name>ADP-D-ribose</name>
        <dbReference type="ChEBI" id="CHEBI:57967"/>
    </ligand>
    <ligandPart>
        <name>diphosphate group</name>
        <dbReference type="ChEBI" id="CHEBI:68549"/>
    </ligandPart>
</feature>
<feature type="binding site" evidence="1 6">
    <location>
        <position position="351"/>
    </location>
    <ligand>
        <name>ADP-D-ribose</name>
        <dbReference type="ChEBI" id="CHEBI:57967"/>
    </ligand>
    <ligandPart>
        <name>diphosphate group</name>
        <dbReference type="ChEBI" id="CHEBI:68549"/>
    </ligandPart>
</feature>
<feature type="binding site" evidence="1 6">
    <location>
        <position position="353"/>
    </location>
    <ligand>
        <name>ADP-D-ribose</name>
        <dbReference type="ChEBI" id="CHEBI:57967"/>
    </ligand>
    <ligandPart>
        <name>diphosphate group</name>
        <dbReference type="ChEBI" id="CHEBI:68549"/>
    </ligandPart>
</feature>
<feature type="binding site" evidence="1 6">
    <location>
        <position position="354"/>
    </location>
    <ligand>
        <name>ADP-D-ribose</name>
        <dbReference type="ChEBI" id="CHEBI:57967"/>
    </ligand>
    <ligandPart>
        <name>diphosphate group</name>
        <dbReference type="ChEBI" id="CHEBI:68549"/>
    </ligandPart>
</feature>
<feature type="binding site" evidence="1 6">
    <location>
        <position position="355"/>
    </location>
    <ligand>
        <name>ADP-D-ribose</name>
        <dbReference type="ChEBI" id="CHEBI:57967"/>
    </ligand>
    <ligandPart>
        <name>diphosphate group</name>
        <dbReference type="ChEBI" id="CHEBI:68549"/>
    </ligandPart>
</feature>
<feature type="binding site" evidence="1 6">
    <location>
        <position position="390"/>
    </location>
    <ligand>
        <name>ADP-D-ribose</name>
        <dbReference type="ChEBI" id="CHEBI:57967"/>
    </ligand>
    <ligandPart>
        <name>adenine group</name>
        <dbReference type="ChEBI" id="CHEBI:30756"/>
    </ligandPart>
</feature>
<feature type="binding site" evidence="1 6">
    <location>
        <position position="441"/>
    </location>
    <ligand>
        <name>ADP-D-ribose</name>
        <dbReference type="ChEBI" id="CHEBI:57967"/>
    </ligand>
</feature>
<feature type="binding site" evidence="1 6">
    <location>
        <position position="448"/>
    </location>
    <ligand>
        <name>ADP-D-ribose</name>
        <dbReference type="ChEBI" id="CHEBI:57967"/>
    </ligand>
</feature>
<feature type="binding site" evidence="1 6">
    <location>
        <position position="449"/>
    </location>
    <ligand>
        <name>ADP-D-ribose</name>
        <dbReference type="ChEBI" id="CHEBI:57967"/>
    </ligand>
</feature>
<feature type="binding site" evidence="1 6">
    <location>
        <position position="459"/>
    </location>
    <ligand>
        <name>ADP-D-ribose</name>
        <dbReference type="ChEBI" id="CHEBI:57967"/>
    </ligand>
</feature>
<feature type="binding site" evidence="1 6">
    <location>
        <position position="460"/>
    </location>
    <ligand>
        <name>ADP-D-ribose</name>
        <dbReference type="ChEBI" id="CHEBI:57967"/>
    </ligand>
</feature>
<feature type="helix" evidence="7">
    <location>
        <begin position="36"/>
        <end position="45"/>
    </location>
</feature>
<feature type="helix" evidence="7">
    <location>
        <begin position="57"/>
        <end position="65"/>
    </location>
</feature>
<feature type="helix" evidence="7">
    <location>
        <begin position="78"/>
        <end position="80"/>
    </location>
</feature>
<feature type="helix" evidence="7">
    <location>
        <begin position="83"/>
        <end position="85"/>
    </location>
</feature>
<feature type="helix" evidence="7">
    <location>
        <begin position="86"/>
        <end position="94"/>
    </location>
</feature>
<feature type="strand" evidence="7">
    <location>
        <begin position="97"/>
        <end position="101"/>
    </location>
</feature>
<feature type="helix" evidence="7">
    <location>
        <begin position="102"/>
        <end position="118"/>
    </location>
</feature>
<feature type="helix" evidence="7">
    <location>
        <begin position="121"/>
        <end position="127"/>
    </location>
</feature>
<feature type="helix" evidence="7">
    <location>
        <begin position="132"/>
        <end position="141"/>
    </location>
</feature>
<feature type="strand" evidence="7">
    <location>
        <begin position="142"/>
        <end position="148"/>
    </location>
</feature>
<feature type="turn" evidence="7">
    <location>
        <begin position="149"/>
        <end position="152"/>
    </location>
</feature>
<feature type="strand" evidence="7">
    <location>
        <begin position="153"/>
        <end position="155"/>
    </location>
</feature>
<feature type="strand" evidence="7">
    <location>
        <begin position="161"/>
        <end position="163"/>
    </location>
</feature>
<feature type="helix" evidence="7">
    <location>
        <begin position="166"/>
        <end position="168"/>
    </location>
</feature>
<feature type="turn" evidence="7">
    <location>
        <begin position="180"/>
        <end position="182"/>
    </location>
</feature>
<feature type="helix" evidence="7">
    <location>
        <begin position="186"/>
        <end position="192"/>
    </location>
</feature>
<feature type="strand" evidence="7">
    <location>
        <begin position="196"/>
        <end position="202"/>
    </location>
</feature>
<feature type="strand" evidence="7">
    <location>
        <begin position="224"/>
        <end position="231"/>
    </location>
</feature>
<feature type="helix" evidence="7">
    <location>
        <begin position="244"/>
        <end position="247"/>
    </location>
</feature>
<feature type="turn" evidence="7">
    <location>
        <begin position="251"/>
        <end position="253"/>
    </location>
</feature>
<feature type="helix" evidence="7">
    <location>
        <begin position="256"/>
        <end position="258"/>
    </location>
</feature>
<feature type="helix" evidence="7">
    <location>
        <begin position="274"/>
        <end position="286"/>
    </location>
</feature>
<feature type="helix" evidence="7">
    <location>
        <begin position="294"/>
        <end position="296"/>
    </location>
</feature>
<feature type="turn" evidence="7">
    <location>
        <begin position="301"/>
        <end position="303"/>
    </location>
</feature>
<feature type="strand" evidence="7">
    <location>
        <begin position="304"/>
        <end position="307"/>
    </location>
</feature>
<feature type="strand" evidence="7">
    <location>
        <begin position="310"/>
        <end position="313"/>
    </location>
</feature>
<feature type="helix" evidence="7">
    <location>
        <begin position="314"/>
        <end position="339"/>
    </location>
</feature>
<feature type="strand" evidence="7">
    <location>
        <begin position="343"/>
        <end position="347"/>
    </location>
</feature>
<feature type="helix" evidence="7">
    <location>
        <begin position="361"/>
        <end position="376"/>
    </location>
</feature>
<feature type="helix" evidence="7">
    <location>
        <begin position="377"/>
        <end position="380"/>
    </location>
</feature>
<feature type="strand" evidence="7">
    <location>
        <begin position="383"/>
        <end position="388"/>
    </location>
</feature>
<feature type="strand" evidence="7">
    <location>
        <begin position="394"/>
        <end position="396"/>
    </location>
</feature>
<feature type="strand" evidence="7">
    <location>
        <begin position="404"/>
        <end position="406"/>
    </location>
</feature>
<feature type="strand" evidence="7">
    <location>
        <begin position="413"/>
        <end position="420"/>
    </location>
</feature>
<feature type="strand" evidence="7">
    <location>
        <begin position="429"/>
        <end position="431"/>
    </location>
</feature>
<feature type="strand" evidence="7">
    <location>
        <begin position="433"/>
        <end position="439"/>
    </location>
</feature>
<feature type="helix" evidence="7">
    <location>
        <begin position="448"/>
        <end position="452"/>
    </location>
</feature>
<feature type="strand" evidence="7">
    <location>
        <begin position="456"/>
        <end position="458"/>
    </location>
</feature>
<feature type="helix" evidence="7">
    <location>
        <begin position="459"/>
        <end position="466"/>
    </location>
</feature>
<feature type="helix" evidence="7">
    <location>
        <begin position="469"/>
        <end position="472"/>
    </location>
</feature>
<feature type="turn" evidence="7">
    <location>
        <begin position="475"/>
        <end position="477"/>
    </location>
</feature>
<feature type="turn" evidence="7">
    <location>
        <begin position="479"/>
        <end position="481"/>
    </location>
</feature>
<feature type="helix" evidence="7">
    <location>
        <begin position="484"/>
        <end position="486"/>
    </location>
</feature>
<feature type="strand" evidence="7">
    <location>
        <begin position="488"/>
        <end position="491"/>
    </location>
</feature>
<feature type="turn" evidence="7">
    <location>
        <begin position="492"/>
        <end position="494"/>
    </location>
</feature>
<feature type="strand" evidence="7">
    <location>
        <begin position="495"/>
        <end position="498"/>
    </location>
</feature>
<feature type="helix" evidence="7">
    <location>
        <begin position="499"/>
        <end position="505"/>
    </location>
</feature>
<accession>Q9W4J9</accession>
<gene>
    <name evidence="4" type="ORF">CG3568</name>
</gene>
<dbReference type="EC" id="3.2.2.19" evidence="1"/>
<dbReference type="EMBL" id="AE014298">
    <property type="protein sequence ID" value="AAF45952.2"/>
    <property type="molecule type" value="Genomic_DNA"/>
</dbReference>
<dbReference type="EMBL" id="AY113290">
    <property type="protein sequence ID" value="AAM29295.1"/>
    <property type="molecule type" value="mRNA"/>
</dbReference>
<dbReference type="RefSeq" id="NP_572166.1">
    <property type="nucleotide sequence ID" value="NM_131938.2"/>
</dbReference>
<dbReference type="PDB" id="8DMU">
    <property type="method" value="X-ray"/>
    <property type="resolution" value="2.00 A"/>
    <property type="chains" value="A/B/C/D=25-508"/>
</dbReference>
<dbReference type="PDBsum" id="8DMU"/>
<dbReference type="SMR" id="Q9W4J9"/>
<dbReference type="STRING" id="7227.FBpp0070644"/>
<dbReference type="PaxDb" id="7227-FBpp0070644"/>
<dbReference type="DNASU" id="31383"/>
<dbReference type="EnsemblMetazoa" id="FBtr0070676">
    <property type="protein sequence ID" value="FBpp0070644"/>
    <property type="gene ID" value="FBgn0029710"/>
</dbReference>
<dbReference type="GeneID" id="31383"/>
<dbReference type="KEGG" id="dme:Dmel_CG3568"/>
<dbReference type="UCSC" id="CG3568-RA">
    <property type="organism name" value="d. melanogaster"/>
</dbReference>
<dbReference type="AGR" id="FB:FBgn0029710"/>
<dbReference type="FlyBase" id="FBgn0029710">
    <property type="gene designation" value="CG3568"/>
</dbReference>
<dbReference type="VEuPathDB" id="VectorBase:FBgn0029710"/>
<dbReference type="eggNOG" id="ENOG502QV0E">
    <property type="taxonomic scope" value="Eukaryota"/>
</dbReference>
<dbReference type="GeneTree" id="ENSGT00540000073774"/>
<dbReference type="HOGENOM" id="CLU_042117_0_0_1"/>
<dbReference type="OMA" id="PVVTYAW"/>
<dbReference type="OrthoDB" id="6357136at2759"/>
<dbReference type="BioGRID-ORCS" id="31383">
    <property type="hits" value="0 hits in 1 CRISPR screen"/>
</dbReference>
<dbReference type="Proteomes" id="UP000000803">
    <property type="component" value="Chromosome X"/>
</dbReference>
<dbReference type="Bgee" id="FBgn0029710">
    <property type="expression patterns" value="Expressed in embryonic/larval hemocyte (Drosophila) and 39 other cell types or tissues"/>
</dbReference>
<dbReference type="ExpressionAtlas" id="Q9W4J9">
    <property type="expression patterns" value="baseline and differential"/>
</dbReference>
<dbReference type="GO" id="GO:0003875">
    <property type="term" value="F:ADP-ribosylarginine hydrolase activity"/>
    <property type="evidence" value="ECO:0000314"/>
    <property type="project" value="FlyBase"/>
</dbReference>
<dbReference type="InterPro" id="IPR032063">
    <property type="entry name" value="MavL-like"/>
</dbReference>
<dbReference type="Pfam" id="PF16062">
    <property type="entry name" value="MavL-like"/>
    <property type="match status" value="1"/>
</dbReference>